<evidence type="ECO:0000255" key="1">
    <source>
        <dbReference type="HAMAP-Rule" id="MF_04004"/>
    </source>
</evidence>
<dbReference type="EMBL" id="M62877">
    <property type="status" value="NOT_ANNOTATED_CDS"/>
    <property type="molecule type" value="Genomic_DNA"/>
</dbReference>
<dbReference type="PIR" id="F40415">
    <property type="entry name" value="W7WL51"/>
</dbReference>
<dbReference type="SMR" id="P26558"/>
<dbReference type="Proteomes" id="UP000009125">
    <property type="component" value="Segment"/>
</dbReference>
<dbReference type="GO" id="GO:0030430">
    <property type="term" value="C:host cell cytoplasm"/>
    <property type="evidence" value="ECO:0007669"/>
    <property type="project" value="UniProtKB-SubCell"/>
</dbReference>
<dbReference type="GO" id="GO:0042025">
    <property type="term" value="C:host cell nucleus"/>
    <property type="evidence" value="ECO:0007669"/>
    <property type="project" value="UniProtKB-SubCell"/>
</dbReference>
<dbReference type="GO" id="GO:0003677">
    <property type="term" value="F:DNA binding"/>
    <property type="evidence" value="ECO:0007669"/>
    <property type="project" value="UniProtKB-UniRule"/>
</dbReference>
<dbReference type="GO" id="GO:0003700">
    <property type="term" value="F:DNA-binding transcription factor activity"/>
    <property type="evidence" value="ECO:0007669"/>
    <property type="project" value="UniProtKB-UniRule"/>
</dbReference>
<dbReference type="GO" id="GO:0019904">
    <property type="term" value="F:protein domain specific binding"/>
    <property type="evidence" value="ECO:0007669"/>
    <property type="project" value="UniProtKB-UniRule"/>
</dbReference>
<dbReference type="GO" id="GO:0008270">
    <property type="term" value="F:zinc ion binding"/>
    <property type="evidence" value="ECO:0007669"/>
    <property type="project" value="UniProtKB-KW"/>
</dbReference>
<dbReference type="GO" id="GO:0006351">
    <property type="term" value="P:DNA-templated transcription"/>
    <property type="evidence" value="ECO:0007669"/>
    <property type="project" value="UniProtKB-UniRule"/>
</dbReference>
<dbReference type="GO" id="GO:0039645">
    <property type="term" value="P:symbiont-mediated perturbation of host cell cycle G1/S transition checkpoint"/>
    <property type="evidence" value="ECO:0007669"/>
    <property type="project" value="UniProtKB-UniRule"/>
</dbReference>
<dbReference type="GO" id="GO:0052170">
    <property type="term" value="P:symbiont-mediated suppression of host innate immune response"/>
    <property type="evidence" value="ECO:0007669"/>
    <property type="project" value="UniProtKB-KW"/>
</dbReference>
<dbReference type="GO" id="GO:0039502">
    <property type="term" value="P:symbiont-mediated suppression of host type I interferon-mediated signaling pathway"/>
    <property type="evidence" value="ECO:0007669"/>
    <property type="project" value="UniProtKB-UniRule"/>
</dbReference>
<dbReference type="Gene3D" id="3.30.160.330">
    <property type="match status" value="1"/>
</dbReference>
<dbReference type="HAMAP" id="MF_04004">
    <property type="entry name" value="PPV_E7"/>
    <property type="match status" value="1"/>
</dbReference>
<dbReference type="InterPro" id="IPR000148">
    <property type="entry name" value="Papilloma_E7"/>
</dbReference>
<dbReference type="Pfam" id="PF00527">
    <property type="entry name" value="E7"/>
    <property type="match status" value="1"/>
</dbReference>
<dbReference type="PIRSF" id="PIRSF003407">
    <property type="entry name" value="Papvi_E7"/>
    <property type="match status" value="1"/>
</dbReference>
<dbReference type="SUPFAM" id="SSF161234">
    <property type="entry name" value="E7 C-terminal domain-like"/>
    <property type="match status" value="1"/>
</dbReference>
<reference key="1">
    <citation type="journal article" date="1991" name="J. Virol.">
        <title>Biologic properties and nucleotide sequence analysis of human papillomavirus type 51.</title>
        <authorList>
            <person name="Lungu O."/>
            <person name="Crum C.P."/>
            <person name="Silverstein S.J."/>
        </authorList>
    </citation>
    <scope>NUCLEOTIDE SEQUENCE [GENOMIC DNA]</scope>
</reference>
<reference key="2">
    <citation type="journal article" date="2002" name="Rev. Med. Virol.">
        <title>Interactions of SV40 large T antigen and other viral proteins with retinoblastoma tumour suppressor.</title>
        <authorList>
            <person name="Lee C."/>
            <person name="Cho Y."/>
        </authorList>
    </citation>
    <scope>REVIEW</scope>
</reference>
<proteinExistence type="inferred from homology"/>
<sequence>MRGNVPQLKDVVLHLTPQTEIDLQCYEQFDSSEEEDEVDNMRDQLPERRAGQATCYRIEAPCCRCSSVVQLAVESSGDTLRVVQQMLMGELSLVCPCCANN</sequence>
<keyword id="KW-0010">Activator</keyword>
<keyword id="KW-0238">DNA-binding</keyword>
<keyword id="KW-0244">Early protein</keyword>
<keyword id="KW-1078">G1/S host cell cycle checkpoint dysregulation by virus</keyword>
<keyword id="KW-1035">Host cytoplasm</keyword>
<keyword id="KW-1048">Host nucleus</keyword>
<keyword id="KW-0945">Host-virus interaction</keyword>
<keyword id="KW-1090">Inhibition of host innate immune response by virus</keyword>
<keyword id="KW-1114">Inhibition of host interferon signaling pathway by virus</keyword>
<keyword id="KW-0922">Interferon antiviral system evasion</keyword>
<keyword id="KW-0479">Metal-binding</keyword>
<keyword id="KW-1121">Modulation of host cell cycle by virus</keyword>
<keyword id="KW-0553">Oncogene</keyword>
<keyword id="KW-0804">Transcription</keyword>
<keyword id="KW-0805">Transcription regulation</keyword>
<keyword id="KW-0899">Viral immunoevasion</keyword>
<keyword id="KW-0862">Zinc</keyword>
<keyword id="KW-0863">Zinc-finger</keyword>
<protein>
    <recommendedName>
        <fullName evidence="1">Protein E7</fullName>
    </recommendedName>
</protein>
<name>VE7_HPV51</name>
<comment type="function">
    <text evidence="1">Plays a role in viral genome replication by driving entry of quiescent cells into the cell cycle. Stimulation of progression from G1 to S phase allows the virus to efficiently use the cellular DNA replicating machinery to achieve viral genome replication. E7 protein has both transforming and trans-activating activities. Induces the disassembly of the E2F1 transcription factor from RB1, with subsequent transcriptional activation of E2F1-regulated S-phase genes. Interferes with host histone deacetylation mediated by HDAC1 and HDAC2, leading to transcription activation. Also plays a role in the inhibition of both antiviral and antiproliferative functions of host interferon alpha. Interaction with host TMEM173/STING impairs the ability of TMEM173/STING to sense cytosolic DNA and promote the production of type I interferon (IFN-alpha and IFN-beta).</text>
</comment>
<comment type="subunit">
    <text evidence="1">Homodimer. Homooligomer. Interacts with host RB1; this interaction induces dissociation of RB1-E2F1 complex thereby disrupting RB1 activity. Interacts with host EP300; this interaction represses EP300 transcriptional activity. Interacts with protein E2; this interaction inhibits E7 oncogenic activity. Interacts with host TMEM173/STING; this interaction impairs the ability of TMEM173/STING to sense cytosolic DNA and promote the production of type I interferon (IFN-alpha and IFN-beta).</text>
</comment>
<comment type="subcellular location">
    <subcellularLocation>
        <location evidence="1">Host cytoplasm</location>
    </subcellularLocation>
    <subcellularLocation>
        <location evidence="1">Host nucleus</location>
    </subcellularLocation>
    <text evidence="1">Predominantly found in the host nucleus.</text>
</comment>
<comment type="domain">
    <text evidence="1">The E7 terminal domain is an intrinsically disordered domain, whose flexibility and conformational transitions confer target adaptability to the oncoprotein. It allows adaptation to a variety of protein targets and exposes the PEST degradation sequence that regulates its turnover in the cell.</text>
</comment>
<comment type="PTM">
    <text evidence="1">Highly phosphorylated.</text>
</comment>
<comment type="similarity">
    <text evidence="1">Belongs to the papillomaviridae E7 protein family.</text>
</comment>
<accession>P26558</accession>
<organismHost>
    <name type="scientific">Homo sapiens</name>
    <name type="common">Human</name>
    <dbReference type="NCBI Taxonomy" id="9606"/>
</organismHost>
<feature type="chain" id="PRO_0000133447" description="Protein E7">
    <location>
        <begin position="1"/>
        <end position="101"/>
    </location>
</feature>
<feature type="zinc finger region" evidence="1">
    <location>
        <begin position="62"/>
        <end position="98"/>
    </location>
</feature>
<feature type="region of interest" description="E7 terminal domain" evidence="1">
    <location>
        <begin position="1"/>
        <end position="43"/>
    </location>
</feature>
<feature type="short sequence motif" description="LXCXE motif; interaction with host RB1 and TMEM173/STING" evidence="1">
    <location>
        <begin position="23"/>
        <end position="27"/>
    </location>
</feature>
<feature type="short sequence motif" description="Nuclear export signal" evidence="1">
    <location>
        <begin position="80"/>
        <end position="88"/>
    </location>
</feature>
<gene>
    <name evidence="1" type="primary">E7</name>
</gene>
<organism>
    <name type="scientific">Human papillomavirus 51</name>
    <dbReference type="NCBI Taxonomy" id="10595"/>
    <lineage>
        <taxon>Viruses</taxon>
        <taxon>Monodnaviria</taxon>
        <taxon>Shotokuvirae</taxon>
        <taxon>Cossaviricota</taxon>
        <taxon>Papovaviricetes</taxon>
        <taxon>Zurhausenvirales</taxon>
        <taxon>Papillomaviridae</taxon>
        <taxon>Firstpapillomavirinae</taxon>
        <taxon>Alphapapillomavirus</taxon>
        <taxon>Alphapapillomavirus 5</taxon>
    </lineage>
</organism>